<dbReference type="EMBL" id="L13700">
    <property type="protein sequence ID" value="AAA23111.1"/>
    <property type="molecule type" value="Genomic_DNA"/>
</dbReference>
<dbReference type="EMBL" id="AE006470">
    <property type="protein sequence ID" value="AAM72726.1"/>
    <property type="molecule type" value="Genomic_DNA"/>
</dbReference>
<dbReference type="RefSeq" id="NP_662384.1">
    <property type="nucleotide sequence ID" value="NC_002932.3"/>
</dbReference>
<dbReference type="RefSeq" id="WP_010933165.1">
    <property type="nucleotide sequence ID" value="NC_002932.3"/>
</dbReference>
<dbReference type="PDB" id="3BSD">
    <property type="method" value="X-ray"/>
    <property type="resolution" value="2.30 A"/>
    <property type="chains" value="A=1-366"/>
</dbReference>
<dbReference type="PDB" id="3ENI">
    <property type="method" value="X-ray"/>
    <property type="resolution" value="2.20 A"/>
    <property type="chains" value="A/C=2-366"/>
</dbReference>
<dbReference type="PDB" id="5H8Z">
    <property type="method" value="X-ray"/>
    <property type="resolution" value="1.80 A"/>
    <property type="chains" value="A/C=2-366"/>
</dbReference>
<dbReference type="PDB" id="6M32">
    <property type="method" value="EM"/>
    <property type="resolution" value="2.70 A"/>
    <property type="chains" value="E/F/G=1-366"/>
</dbReference>
<dbReference type="PDB" id="7UEA">
    <property type="method" value="EM"/>
    <property type="resolution" value="3.49 A"/>
    <property type="chains" value="U/V/W=1-366"/>
</dbReference>
<dbReference type="PDB" id="7UEB">
    <property type="method" value="EM"/>
    <property type="resolution" value="3.08 A"/>
    <property type="chains" value="U/V/W/X/Y/Z=1-366"/>
</dbReference>
<dbReference type="PDB" id="7Z6Q">
    <property type="method" value="EM"/>
    <property type="resolution" value="2.50 A"/>
    <property type="chains" value="E/F/G/H/I/J=1-366"/>
</dbReference>
<dbReference type="PDB" id="8GWA">
    <property type="method" value="EM"/>
    <property type="resolution" value="2.90 A"/>
    <property type="chains" value="1/2/3/4/5/6=1-366"/>
</dbReference>
<dbReference type="PDBsum" id="3BSD"/>
<dbReference type="PDBsum" id="3ENI"/>
<dbReference type="PDBsum" id="5H8Z"/>
<dbReference type="PDBsum" id="6M32"/>
<dbReference type="PDBsum" id="7UEA"/>
<dbReference type="PDBsum" id="7UEB"/>
<dbReference type="PDBsum" id="7Z6Q"/>
<dbReference type="PDBsum" id="8GWA"/>
<dbReference type="EMDB" id="EMD-14528"/>
<dbReference type="EMDB" id="EMD-26469"/>
<dbReference type="EMDB" id="EMD-26471"/>
<dbReference type="EMDB" id="EMD-30069"/>
<dbReference type="EMDB" id="EMD-34307"/>
<dbReference type="SMR" id="Q46393"/>
<dbReference type="IntAct" id="Q46393">
    <property type="interactions" value="3"/>
</dbReference>
<dbReference type="STRING" id="194439.CT1499"/>
<dbReference type="DrugBank" id="DB01853">
    <property type="generic name" value="Bacteriochlorophyll A"/>
</dbReference>
<dbReference type="EnsemblBacteria" id="AAM72726">
    <property type="protein sequence ID" value="AAM72726"/>
    <property type="gene ID" value="CT1499"/>
</dbReference>
<dbReference type="KEGG" id="cte:CT1499"/>
<dbReference type="PATRIC" id="fig|194439.7.peg.1359"/>
<dbReference type="eggNOG" id="ENOG502ZAKC">
    <property type="taxonomic scope" value="Bacteria"/>
</dbReference>
<dbReference type="HOGENOM" id="CLU_756161_0_0_10"/>
<dbReference type="OrthoDB" id="596555at2"/>
<dbReference type="EvolutionaryTrace" id="Q46393"/>
<dbReference type="Proteomes" id="UP000001007">
    <property type="component" value="Chromosome"/>
</dbReference>
<dbReference type="GO" id="GO:0042314">
    <property type="term" value="F:bacteriochlorophyll binding"/>
    <property type="evidence" value="ECO:0007669"/>
    <property type="project" value="UniProtKB-KW"/>
</dbReference>
<dbReference type="GO" id="GO:0046872">
    <property type="term" value="F:metal ion binding"/>
    <property type="evidence" value="ECO:0007669"/>
    <property type="project" value="UniProtKB-KW"/>
</dbReference>
<dbReference type="GO" id="GO:0015979">
    <property type="term" value="P:photosynthesis"/>
    <property type="evidence" value="ECO:0007669"/>
    <property type="project" value="UniProtKB-KW"/>
</dbReference>
<dbReference type="Gene3D" id="2.50.10.10">
    <property type="entry name" value="Bacteriochlorophyll A"/>
    <property type="match status" value="1"/>
</dbReference>
<dbReference type="InterPro" id="IPR003426">
    <property type="entry name" value="BChl_A"/>
</dbReference>
<dbReference type="InterPro" id="IPR036559">
    <property type="entry name" value="Chl_A_sf"/>
</dbReference>
<dbReference type="Pfam" id="PF02327">
    <property type="entry name" value="BChl_A"/>
    <property type="match status" value="1"/>
</dbReference>
<dbReference type="SUPFAM" id="SSF51081">
    <property type="entry name" value="Bacteriochlorophyll A protein"/>
    <property type="match status" value="1"/>
</dbReference>
<keyword id="KW-0002">3D-structure</keyword>
<keyword id="KW-0076">Bacteriochlorophyll</keyword>
<keyword id="KW-0148">Chlorophyll</keyword>
<keyword id="KW-0157">Chromophore</keyword>
<keyword id="KW-0249">Electron transport</keyword>
<keyword id="KW-0460">Magnesium</keyword>
<keyword id="KW-0479">Metal-binding</keyword>
<keyword id="KW-0602">Photosynthesis</keyword>
<keyword id="KW-0674">Reaction center</keyword>
<keyword id="KW-1185">Reference proteome</keyword>
<keyword id="KW-0813">Transport</keyword>
<proteinExistence type="evidence at protein level"/>
<evidence type="ECO:0000250" key="1"/>
<evidence type="ECO:0007829" key="2">
    <source>
        <dbReference type="PDB" id="5H8Z"/>
    </source>
</evidence>
<feature type="initiator methionine" description="Removed" evidence="1">
    <location>
        <position position="1"/>
    </location>
</feature>
<feature type="chain" id="PRO_0000064892" description="Bacteriochlorophyll a protein">
    <location>
        <begin position="2"/>
        <end position="366"/>
    </location>
</feature>
<feature type="binding site" description="axial binding residue">
    <location>
        <position position="111"/>
    </location>
    <ligand>
        <name>bacteriochlorophyll a</name>
        <dbReference type="ChEBI" id="CHEBI:61720"/>
        <label>1</label>
    </ligand>
    <ligandPart>
        <name>Mg</name>
        <dbReference type="ChEBI" id="CHEBI:25107"/>
    </ligandPart>
</feature>
<feature type="binding site" description="axial binding residue">
    <location>
        <position position="146"/>
    </location>
    <ligand>
        <name>bacteriochlorophyll a</name>
        <dbReference type="ChEBI" id="CHEBI:61720"/>
        <label>6</label>
    </ligand>
    <ligandPart>
        <name>Mg</name>
        <dbReference type="ChEBI" id="CHEBI:25107"/>
    </ligandPart>
</feature>
<feature type="binding site" description="axial binding residue">
    <location>
        <position position="290"/>
    </location>
    <ligand>
        <name>bacteriochlorophyll a</name>
        <dbReference type="ChEBI" id="CHEBI:61720"/>
        <label>4</label>
    </ligand>
    <ligandPart>
        <name>Mg</name>
        <dbReference type="ChEBI" id="CHEBI:25107"/>
    </ligandPart>
</feature>
<feature type="binding site" description="axial binding residue">
    <location>
        <position position="297"/>
    </location>
    <ligand>
        <name>bacteriochlorophyll a</name>
        <dbReference type="ChEBI" id="CHEBI:61720"/>
        <label>7</label>
    </ligand>
    <ligandPart>
        <name>Mg</name>
        <dbReference type="ChEBI" id="CHEBI:25107"/>
    </ligandPart>
</feature>
<feature type="binding site" description="axial binding residue">
    <location>
        <position position="298"/>
    </location>
    <ligand>
        <name>bacteriochlorophyll a</name>
        <dbReference type="ChEBI" id="CHEBI:61720"/>
        <label>3</label>
    </ligand>
    <ligandPart>
        <name>Mg</name>
        <dbReference type="ChEBI" id="CHEBI:25107"/>
    </ligandPart>
</feature>
<feature type="strand" evidence="2">
    <location>
        <begin position="11"/>
        <end position="20"/>
    </location>
</feature>
<feature type="strand" evidence="2">
    <location>
        <begin position="28"/>
        <end position="38"/>
    </location>
</feature>
<feature type="strand" evidence="2">
    <location>
        <begin position="47"/>
        <end position="59"/>
    </location>
</feature>
<feature type="turn" evidence="2">
    <location>
        <begin position="60"/>
        <end position="63"/>
    </location>
</feature>
<feature type="strand" evidence="2">
    <location>
        <begin position="64"/>
        <end position="75"/>
    </location>
</feature>
<feature type="strand" evidence="2">
    <location>
        <begin position="78"/>
        <end position="106"/>
    </location>
</feature>
<feature type="strand" evidence="2">
    <location>
        <begin position="109"/>
        <end position="124"/>
    </location>
</feature>
<feature type="helix" evidence="2">
    <location>
        <begin position="128"/>
        <end position="131"/>
    </location>
</feature>
<feature type="strand" evidence="2">
    <location>
        <begin position="142"/>
        <end position="153"/>
    </location>
</feature>
<feature type="helix" evidence="2">
    <location>
        <begin position="157"/>
        <end position="172"/>
    </location>
</feature>
<feature type="helix" evidence="2">
    <location>
        <begin position="176"/>
        <end position="184"/>
    </location>
</feature>
<feature type="turn" evidence="2">
    <location>
        <begin position="186"/>
        <end position="188"/>
    </location>
</feature>
<feature type="helix" evidence="2">
    <location>
        <begin position="189"/>
        <end position="195"/>
    </location>
</feature>
<feature type="strand" evidence="2">
    <location>
        <begin position="198"/>
        <end position="200"/>
    </location>
</feature>
<feature type="strand" evidence="2">
    <location>
        <begin position="204"/>
        <end position="212"/>
    </location>
</feature>
<feature type="strand" evidence="2">
    <location>
        <begin position="214"/>
        <end position="231"/>
    </location>
</feature>
<feature type="helix" evidence="2">
    <location>
        <begin position="234"/>
        <end position="237"/>
    </location>
</feature>
<feature type="turn" evidence="2">
    <location>
        <begin position="238"/>
        <end position="242"/>
    </location>
</feature>
<feature type="helix" evidence="2">
    <location>
        <begin position="245"/>
        <end position="247"/>
    </location>
</feature>
<feature type="strand" evidence="2">
    <location>
        <begin position="252"/>
        <end position="261"/>
    </location>
</feature>
<feature type="strand" evidence="2">
    <location>
        <begin position="264"/>
        <end position="274"/>
    </location>
</feature>
<feature type="strand" evidence="2">
    <location>
        <begin position="276"/>
        <end position="281"/>
    </location>
</feature>
<feature type="strand" evidence="2">
    <location>
        <begin position="284"/>
        <end position="287"/>
    </location>
</feature>
<feature type="helix" evidence="2">
    <location>
        <begin position="292"/>
        <end position="299"/>
    </location>
</feature>
<feature type="turn" evidence="2">
    <location>
        <begin position="300"/>
        <end position="303"/>
    </location>
</feature>
<feature type="strand" evidence="2">
    <location>
        <begin position="308"/>
        <end position="316"/>
    </location>
</feature>
<feature type="strand" evidence="2">
    <location>
        <begin position="322"/>
        <end position="328"/>
    </location>
</feature>
<feature type="strand" evidence="2">
    <location>
        <begin position="331"/>
        <end position="334"/>
    </location>
</feature>
<feature type="strand" evidence="2">
    <location>
        <begin position="337"/>
        <end position="342"/>
    </location>
</feature>
<feature type="helix" evidence="2">
    <location>
        <begin position="343"/>
        <end position="353"/>
    </location>
</feature>
<feature type="strand" evidence="2">
    <location>
        <begin position="361"/>
        <end position="365"/>
    </location>
</feature>
<reference key="1">
    <citation type="book" date="1992" name="Research in photosynthesis">
        <title>Cloning and sequencing of the FMO-protein gene from Chlorobium tepidum.</title>
        <editorList>
            <person name="Murata N."/>
        </editorList>
        <authorList>
            <person name="Dracheva S."/>
            <person name="Williams J.A.C."/>
            <person name="Blankenship R.E."/>
        </authorList>
    </citation>
    <scope>NUCLEOTIDE SEQUENCE [GENOMIC DNA]</scope>
</reference>
<reference key="2">
    <citation type="journal article" date="2002" name="Proc. Natl. Acad. Sci. U.S.A.">
        <title>The complete genome sequence of Chlorobium tepidum TLS, a photosynthetic, anaerobic, green-sulfur bacterium.</title>
        <authorList>
            <person name="Eisen J.A."/>
            <person name="Nelson K.E."/>
            <person name="Paulsen I.T."/>
            <person name="Heidelberg J.F."/>
            <person name="Wu M."/>
            <person name="Dodson R.J."/>
            <person name="DeBoy R.T."/>
            <person name="Gwinn M.L."/>
            <person name="Nelson W.C."/>
            <person name="Haft D.H."/>
            <person name="Hickey E.K."/>
            <person name="Peterson J.D."/>
            <person name="Durkin A.S."/>
            <person name="Kolonay J.F."/>
            <person name="Yang F."/>
            <person name="Holt I.E."/>
            <person name="Umayam L.A."/>
            <person name="Mason T.M."/>
            <person name="Brenner M."/>
            <person name="Shea T.P."/>
            <person name="Parksey D.S."/>
            <person name="Nierman W.C."/>
            <person name="Feldblyum T.V."/>
            <person name="Hansen C.L."/>
            <person name="Craven M.B."/>
            <person name="Radune D."/>
            <person name="Vamathevan J.J."/>
            <person name="Khouri H.M."/>
            <person name="White O."/>
            <person name="Gruber T.M."/>
            <person name="Ketchum K.A."/>
            <person name="Venter J.C."/>
            <person name="Tettelin H."/>
            <person name="Bryant D.A."/>
            <person name="Fraser C.M."/>
        </authorList>
    </citation>
    <scope>NUCLEOTIDE SEQUENCE [LARGE SCALE GENOMIC DNA]</scope>
    <source>
        <strain>ATCC 49652 / DSM 12025 / NBRC 103806 / TLS</strain>
    </source>
</reference>
<reference key="3">
    <citation type="journal article" date="1997" name="J. Mol. Biol.">
        <title>Crystal structure of the bacteriochlorophyll a protein from Chlorobium tepidum.</title>
        <authorList>
            <person name="Li Y.F."/>
            <person name="Zhou W."/>
            <person name="Blankenship R.E."/>
            <person name="Allen J.P."/>
        </authorList>
    </citation>
    <scope>X-RAY CRYSTALLOGRAPHY (2.5 ANGSTROMS)</scope>
</reference>
<protein>
    <recommendedName>
        <fullName>Bacteriochlorophyll a protein</fullName>
        <shortName>BCP</shortName>
        <shortName>BChl a protein</shortName>
    </recommendedName>
    <alternativeName>
        <fullName>Fenna-Matthews-Olson protein</fullName>
        <shortName>FMO protein</shortName>
    </alternativeName>
</protein>
<organism>
    <name type="scientific">Chlorobaculum tepidum (strain ATCC 49652 / DSM 12025 / NBRC 103806 / TLS)</name>
    <name type="common">Chlorobium tepidum</name>
    <dbReference type="NCBI Taxonomy" id="194439"/>
    <lineage>
        <taxon>Bacteria</taxon>
        <taxon>Pseudomonadati</taxon>
        <taxon>Chlorobiota</taxon>
        <taxon>Chlorobiia</taxon>
        <taxon>Chlorobiales</taxon>
        <taxon>Chlorobiaceae</taxon>
        <taxon>Chlorobaculum</taxon>
    </lineage>
</organism>
<comment type="function">
    <text>Intermediary in the transfer of excitation energy from the chlorophyll to the reaction centers.</text>
</comment>
<comment type="subunit">
    <text>Homotrimer. Each subunit contains 7 molecules of bacteriochlorophyll a.</text>
</comment>
<sequence length="366" mass="40295">MALFGSNDVTTAHSDYEIVLEGGSSSWGKVKARAKVNAPPASPLLPADCDVKLNVKPLDPAKGFVRISAVFESIVDSTKNKLTIEADIANETKERRISVGEGMVSVGDFSHTFSFEGSVVNLFYYRSDAVRRNVPNPIYMQGRQFHDILMKVPLDNNDLIDTWEGTVKAIGSTGAFNDWIRDFWFIGPAFTALNEGGQRISRIEVNGLNTESGPKGPVGVSRWRFSHGGSGMVDSISRWAELFPSDKLNRPAQVEAGFRSDSQGIEVKVDGEFPGVSVDAGGGLRRILNHPLIPLVHHGMVGKFNNFNVDAQLKVVLPKGYKIRYAAPQYRSQNLEEYRWSGGAYARWVEHVCKGGVGQFEILYAQ</sequence>
<accession>Q46393</accession>
<name>BCPA_CHLTE</name>
<gene>
    <name type="primary">fmoA</name>
    <name type="ordered locus">CT1499</name>
</gene>